<proteinExistence type="inferred from homology"/>
<protein>
    <recommendedName>
        <fullName evidence="1">Phosphate import ATP-binding protein PstB</fullName>
        <ecNumber evidence="1">7.3.2.1</ecNumber>
    </recommendedName>
    <alternativeName>
        <fullName evidence="1">ABC phosphate transporter</fullName>
    </alternativeName>
    <alternativeName>
        <fullName evidence="1">Phosphate-transporting ATPase</fullName>
    </alternativeName>
</protein>
<name>PSTB_BORPA</name>
<sequence length="258" mass="29030">MENTATAPNAKLEVKNLNFYYGKFHAIRNVNMSIRENKVTAFIGPSGCGKSTLLRTFNRMFELYPGQRAEGEILLDGENLLTSKTDISLIRAKVGMVFQKPTPFPMSIYDNIAFGVRLFERLSKGEMDERVEWALSKAALWNEVKDKLHQSGNSLSGGQQQRLCIARGVAIKPEVLLLDEPCSALDPISTAKIEELIAELKHEYTVVIVTHNMQQAARCSDYTAYMYLGELMEYGATDQIFVKPARKETEDYITGRFG</sequence>
<dbReference type="EC" id="7.3.2.1" evidence="1"/>
<dbReference type="EMBL" id="BX640429">
    <property type="protein sequence ID" value="CAE37376.1"/>
    <property type="status" value="ALT_INIT"/>
    <property type="molecule type" value="Genomic_DNA"/>
</dbReference>
<dbReference type="RefSeq" id="WP_033448479.1">
    <property type="nucleotide sequence ID" value="NC_002928.3"/>
</dbReference>
<dbReference type="SMR" id="Q7W8Q6"/>
<dbReference type="GeneID" id="93203850"/>
<dbReference type="KEGG" id="bpa:BPP2076"/>
<dbReference type="HOGENOM" id="CLU_000604_1_22_4"/>
<dbReference type="Proteomes" id="UP000001421">
    <property type="component" value="Chromosome"/>
</dbReference>
<dbReference type="GO" id="GO:0005886">
    <property type="term" value="C:plasma membrane"/>
    <property type="evidence" value="ECO:0007669"/>
    <property type="project" value="UniProtKB-SubCell"/>
</dbReference>
<dbReference type="GO" id="GO:0005524">
    <property type="term" value="F:ATP binding"/>
    <property type="evidence" value="ECO:0007669"/>
    <property type="project" value="UniProtKB-KW"/>
</dbReference>
<dbReference type="GO" id="GO:0016887">
    <property type="term" value="F:ATP hydrolysis activity"/>
    <property type="evidence" value="ECO:0007669"/>
    <property type="project" value="InterPro"/>
</dbReference>
<dbReference type="GO" id="GO:0015415">
    <property type="term" value="F:ATPase-coupled phosphate ion transmembrane transporter activity"/>
    <property type="evidence" value="ECO:0007669"/>
    <property type="project" value="UniProtKB-EC"/>
</dbReference>
<dbReference type="GO" id="GO:0035435">
    <property type="term" value="P:phosphate ion transmembrane transport"/>
    <property type="evidence" value="ECO:0007669"/>
    <property type="project" value="InterPro"/>
</dbReference>
<dbReference type="CDD" id="cd03260">
    <property type="entry name" value="ABC_PstB_phosphate_transporter"/>
    <property type="match status" value="1"/>
</dbReference>
<dbReference type="FunFam" id="3.40.50.300:FF:000132">
    <property type="entry name" value="Phosphate import ATP-binding protein PstB"/>
    <property type="match status" value="1"/>
</dbReference>
<dbReference type="Gene3D" id="3.40.50.300">
    <property type="entry name" value="P-loop containing nucleotide triphosphate hydrolases"/>
    <property type="match status" value="1"/>
</dbReference>
<dbReference type="InterPro" id="IPR003593">
    <property type="entry name" value="AAA+_ATPase"/>
</dbReference>
<dbReference type="InterPro" id="IPR003439">
    <property type="entry name" value="ABC_transporter-like_ATP-bd"/>
</dbReference>
<dbReference type="InterPro" id="IPR017871">
    <property type="entry name" value="ABC_transporter-like_CS"/>
</dbReference>
<dbReference type="InterPro" id="IPR027417">
    <property type="entry name" value="P-loop_NTPase"/>
</dbReference>
<dbReference type="InterPro" id="IPR005670">
    <property type="entry name" value="PstB-like"/>
</dbReference>
<dbReference type="NCBIfam" id="TIGR00972">
    <property type="entry name" value="3a0107s01c2"/>
    <property type="match status" value="1"/>
</dbReference>
<dbReference type="PANTHER" id="PTHR43423">
    <property type="entry name" value="ABC TRANSPORTER I FAMILY MEMBER 17"/>
    <property type="match status" value="1"/>
</dbReference>
<dbReference type="PANTHER" id="PTHR43423:SF3">
    <property type="entry name" value="PHOSPHATE IMPORT ATP-BINDING PROTEIN PSTB"/>
    <property type="match status" value="1"/>
</dbReference>
<dbReference type="Pfam" id="PF00005">
    <property type="entry name" value="ABC_tran"/>
    <property type="match status" value="1"/>
</dbReference>
<dbReference type="SMART" id="SM00382">
    <property type="entry name" value="AAA"/>
    <property type="match status" value="1"/>
</dbReference>
<dbReference type="SUPFAM" id="SSF52540">
    <property type="entry name" value="P-loop containing nucleoside triphosphate hydrolases"/>
    <property type="match status" value="1"/>
</dbReference>
<dbReference type="PROSITE" id="PS00211">
    <property type="entry name" value="ABC_TRANSPORTER_1"/>
    <property type="match status" value="1"/>
</dbReference>
<dbReference type="PROSITE" id="PS50893">
    <property type="entry name" value="ABC_TRANSPORTER_2"/>
    <property type="match status" value="1"/>
</dbReference>
<dbReference type="PROSITE" id="PS51238">
    <property type="entry name" value="PSTB"/>
    <property type="match status" value="1"/>
</dbReference>
<comment type="function">
    <text evidence="1">Part of the ABC transporter complex PstSACB involved in phosphate import. Responsible for energy coupling to the transport system.</text>
</comment>
<comment type="catalytic activity">
    <reaction evidence="1">
        <text>phosphate(out) + ATP + H2O = ADP + 2 phosphate(in) + H(+)</text>
        <dbReference type="Rhea" id="RHEA:24440"/>
        <dbReference type="ChEBI" id="CHEBI:15377"/>
        <dbReference type="ChEBI" id="CHEBI:15378"/>
        <dbReference type="ChEBI" id="CHEBI:30616"/>
        <dbReference type="ChEBI" id="CHEBI:43474"/>
        <dbReference type="ChEBI" id="CHEBI:456216"/>
        <dbReference type="EC" id="7.3.2.1"/>
    </reaction>
</comment>
<comment type="subunit">
    <text evidence="1">The complex is composed of two ATP-binding proteins (PstB), two transmembrane proteins (PstC and PstA) and a solute-binding protein (PstS).</text>
</comment>
<comment type="subcellular location">
    <subcellularLocation>
        <location evidence="1">Cell inner membrane</location>
        <topology evidence="1">Peripheral membrane protein</topology>
    </subcellularLocation>
</comment>
<comment type="similarity">
    <text evidence="1">Belongs to the ABC transporter superfamily. Phosphate importer (TC 3.A.1.7) family.</text>
</comment>
<comment type="sequence caution" evidence="2">
    <conflict type="erroneous initiation">
        <sequence resource="EMBL-CDS" id="CAE37376"/>
    </conflict>
</comment>
<keyword id="KW-0067">ATP-binding</keyword>
<keyword id="KW-0997">Cell inner membrane</keyword>
<keyword id="KW-1003">Cell membrane</keyword>
<keyword id="KW-0472">Membrane</keyword>
<keyword id="KW-0547">Nucleotide-binding</keyword>
<keyword id="KW-0592">Phosphate transport</keyword>
<keyword id="KW-1278">Translocase</keyword>
<keyword id="KW-0813">Transport</keyword>
<gene>
    <name evidence="1" type="primary">pstB</name>
    <name type="synonym">phoT</name>
    <name type="ordered locus">BPP2076</name>
</gene>
<feature type="chain" id="PRO_0000092790" description="Phosphate import ATP-binding protein PstB">
    <location>
        <begin position="1"/>
        <end position="258"/>
    </location>
</feature>
<feature type="domain" description="ABC transporter" evidence="1">
    <location>
        <begin position="12"/>
        <end position="253"/>
    </location>
</feature>
<feature type="binding site" evidence="1">
    <location>
        <begin position="44"/>
        <end position="51"/>
    </location>
    <ligand>
        <name>ATP</name>
        <dbReference type="ChEBI" id="CHEBI:30616"/>
    </ligand>
</feature>
<organism>
    <name type="scientific">Bordetella parapertussis (strain 12822 / ATCC BAA-587 / NCTC 13253)</name>
    <dbReference type="NCBI Taxonomy" id="257311"/>
    <lineage>
        <taxon>Bacteria</taxon>
        <taxon>Pseudomonadati</taxon>
        <taxon>Pseudomonadota</taxon>
        <taxon>Betaproteobacteria</taxon>
        <taxon>Burkholderiales</taxon>
        <taxon>Alcaligenaceae</taxon>
        <taxon>Bordetella</taxon>
    </lineage>
</organism>
<reference key="1">
    <citation type="journal article" date="2003" name="Nat. Genet.">
        <title>Comparative analysis of the genome sequences of Bordetella pertussis, Bordetella parapertussis and Bordetella bronchiseptica.</title>
        <authorList>
            <person name="Parkhill J."/>
            <person name="Sebaihia M."/>
            <person name="Preston A."/>
            <person name="Murphy L.D."/>
            <person name="Thomson N.R."/>
            <person name="Harris D.E."/>
            <person name="Holden M.T.G."/>
            <person name="Churcher C.M."/>
            <person name="Bentley S.D."/>
            <person name="Mungall K.L."/>
            <person name="Cerdeno-Tarraga A.-M."/>
            <person name="Temple L."/>
            <person name="James K.D."/>
            <person name="Harris B."/>
            <person name="Quail M.A."/>
            <person name="Achtman M."/>
            <person name="Atkin R."/>
            <person name="Baker S."/>
            <person name="Basham D."/>
            <person name="Bason N."/>
            <person name="Cherevach I."/>
            <person name="Chillingworth T."/>
            <person name="Collins M."/>
            <person name="Cronin A."/>
            <person name="Davis P."/>
            <person name="Doggett J."/>
            <person name="Feltwell T."/>
            <person name="Goble A."/>
            <person name="Hamlin N."/>
            <person name="Hauser H."/>
            <person name="Holroyd S."/>
            <person name="Jagels K."/>
            <person name="Leather S."/>
            <person name="Moule S."/>
            <person name="Norberczak H."/>
            <person name="O'Neil S."/>
            <person name="Ormond D."/>
            <person name="Price C."/>
            <person name="Rabbinowitsch E."/>
            <person name="Rutter S."/>
            <person name="Sanders M."/>
            <person name="Saunders D."/>
            <person name="Seeger K."/>
            <person name="Sharp S."/>
            <person name="Simmonds M."/>
            <person name="Skelton J."/>
            <person name="Squares R."/>
            <person name="Squares S."/>
            <person name="Stevens K."/>
            <person name="Unwin L."/>
            <person name="Whitehead S."/>
            <person name="Barrell B.G."/>
            <person name="Maskell D.J."/>
        </authorList>
    </citation>
    <scope>NUCLEOTIDE SEQUENCE [LARGE SCALE GENOMIC DNA]</scope>
    <source>
        <strain>12822 / ATCC BAA-587 / NCTC 13253</strain>
    </source>
</reference>
<accession>Q7W8Q6</accession>
<evidence type="ECO:0000255" key="1">
    <source>
        <dbReference type="HAMAP-Rule" id="MF_01702"/>
    </source>
</evidence>
<evidence type="ECO:0000305" key="2"/>